<comment type="function">
    <text evidence="1">Male germ cell-specific component of the ribosome, which is required for the formation of sperm and male fertility. Replaces the RPL39 paralog in the ribosome of male germ cells. The ribosome is a large ribonucleoprotein complex responsible for the synthesis of proteins in the cell. The male germ cell-specific ribosome displays a ribosomal polypeptide exit tunnel of distinct size and charge states compared with the classical ribosome. It is responsible for regulating the biosynthesis and folding of a subset of male germ-cell-specific proteins that are essential for the formation of sperm.</text>
</comment>
<comment type="subunit">
    <text evidence="1">Component of a male germ cell-specific 60S large ribosomal subunit (LSU), which contains RPL10L and RPL39L, instead of RPL10 and RPL39 paralogs. The composition of the rest of the complex is similar to classical ribosomes.</text>
</comment>
<comment type="interaction">
    <interactant intactId="EBI-6658607">
        <id>Q96EH5</id>
    </interactant>
    <interactant intactId="EBI-748961">
        <id>O95273</id>
        <label>CCNDBP1</label>
    </interactant>
    <organismsDiffer>false</organismsDiffer>
    <experiments>4</experiments>
</comment>
<comment type="subcellular location">
    <subcellularLocation>
        <location evidence="1">Cytoplasm</location>
    </subcellularLocation>
</comment>
<comment type="tissue specificity">
    <text evidence="2">Testis specific.</text>
</comment>
<comment type="similarity">
    <text evidence="5">Belongs to the eukaryotic ribosomal protein eL39 family.</text>
</comment>
<comment type="online information" name="Protein Spotlight">
    <link uri="https://www.proteinspotlight.org/back_issues/258/"/>
    <text>A shrewd tweak - Issue 258 of May 2023</text>
</comment>
<sequence length="51" mass="6293">MSSHKTFTIKRFLAKKQKQNRPIPQWIQMKPGSKIRYNSKRRHWRRTKLGL</sequence>
<name>RL39L_HUMAN</name>
<proteinExistence type="evidence at protein level"/>
<evidence type="ECO:0000250" key="1">
    <source>
        <dbReference type="UniProtKB" id="Q9CQD0"/>
    </source>
</evidence>
<evidence type="ECO:0000269" key="2">
    <source>
    </source>
</evidence>
<evidence type="ECO:0000303" key="3">
    <source>
    </source>
</evidence>
<evidence type="ECO:0000303" key="4">
    <source>
    </source>
</evidence>
<evidence type="ECO:0000305" key="5"/>
<accession>Q96EH5</accession>
<accession>Q8IUD0</accession>
<reference key="1">
    <citation type="submission" date="1998-05" db="EMBL/GenBank/DDBJ databases">
        <title>Expressed sequence tags from a human cell line.</title>
        <authorList>
            <person name="Bhat K.S."/>
        </authorList>
    </citation>
    <scope>NUCLEOTIDE SEQUENCE [MRNA]</scope>
</reference>
<reference key="2">
    <citation type="journal article" date="2002" name="Biochim. Biophys. Acta">
        <title>A human gene encoding a protein homologous to ribosomal protein L39 is normally expressed in the testis and derepressed in multiple cancer cells.</title>
        <authorList>
            <person name="Nadano D."/>
            <person name="Notsu T."/>
            <person name="Matsuda T."/>
            <person name="Sato T.-A."/>
        </authorList>
    </citation>
    <scope>NUCLEOTIDE SEQUENCE [MRNA]</scope>
</reference>
<reference key="3">
    <citation type="journal article" date="2002" name="Nucleic Acids Res.">
        <title>Functional second genes generated by retrotransposition of the X-linked ribosomal protein genes.</title>
        <authorList>
            <person name="Uechi T."/>
            <person name="Maeda N."/>
            <person name="Tanaka T."/>
            <person name="Kenmochi N."/>
        </authorList>
    </citation>
    <scope>NUCLEOTIDE SEQUENCE [GENOMIC DNA / MRNA]</scope>
    <scope>TISSUE SPECIFICITY</scope>
</reference>
<reference key="4">
    <citation type="journal article" date="2004" name="Genome Res.">
        <title>The status, quality, and expansion of the NIH full-length cDNA project: the Mammalian Gene Collection (MGC).</title>
        <authorList>
            <consortium name="The MGC Project Team"/>
        </authorList>
    </citation>
    <scope>NUCLEOTIDE SEQUENCE [LARGE SCALE MRNA]</scope>
    <source>
        <tissue>Uterus</tissue>
    </source>
</reference>
<gene>
    <name evidence="4" type="primary">RPL39L</name>
    <name type="synonym">RPL39L1</name>
</gene>
<organism>
    <name type="scientific">Homo sapiens</name>
    <name type="common">Human</name>
    <dbReference type="NCBI Taxonomy" id="9606"/>
    <lineage>
        <taxon>Eukaryota</taxon>
        <taxon>Metazoa</taxon>
        <taxon>Chordata</taxon>
        <taxon>Craniata</taxon>
        <taxon>Vertebrata</taxon>
        <taxon>Euteleostomi</taxon>
        <taxon>Mammalia</taxon>
        <taxon>Eutheria</taxon>
        <taxon>Euarchontoglires</taxon>
        <taxon>Primates</taxon>
        <taxon>Haplorrhini</taxon>
        <taxon>Catarrhini</taxon>
        <taxon>Hominidae</taxon>
        <taxon>Homo</taxon>
    </lineage>
</organism>
<protein>
    <recommendedName>
        <fullName evidence="5">Ribosomal protein eL39-like 2</fullName>
    </recommendedName>
    <alternativeName>
        <fullName evidence="3">60S ribosomal protein L39-2</fullName>
    </alternativeName>
    <alternativeName>
        <fullName evidence="4">60S ribosomal protein L39-like</fullName>
    </alternativeName>
    <alternativeName>
        <fullName>Large ribosomal subunit protein eL39-like</fullName>
    </alternativeName>
</protein>
<dbReference type="EMBL" id="L05096">
    <property type="protein sequence ID" value="AAC15859.1"/>
    <property type="molecule type" value="mRNA"/>
</dbReference>
<dbReference type="EMBL" id="AF548529">
    <property type="protein sequence ID" value="AAN52397.1"/>
    <property type="molecule type" value="mRNA"/>
</dbReference>
<dbReference type="EMBL" id="AB063607">
    <property type="protein sequence ID" value="BAC19834.1"/>
    <property type="molecule type" value="Genomic_DNA"/>
</dbReference>
<dbReference type="EMBL" id="AB063610">
    <property type="protein sequence ID" value="BAC19837.1"/>
    <property type="molecule type" value="mRNA"/>
</dbReference>
<dbReference type="EMBL" id="BC012328">
    <property type="protein sequence ID" value="AAH12328.1"/>
    <property type="molecule type" value="mRNA"/>
</dbReference>
<dbReference type="CCDS" id="CCDS3286.1"/>
<dbReference type="RefSeq" id="NP_443201.1">
    <property type="nucleotide sequence ID" value="NM_052969.3"/>
</dbReference>
<dbReference type="SMR" id="Q96EH5"/>
<dbReference type="BioGRID" id="125530">
    <property type="interactions" value="4"/>
</dbReference>
<dbReference type="ComplexPortal" id="CPX-7664">
    <property type="entry name" value="60S cytosolic large ribosomal subunit, testis-specific variant"/>
</dbReference>
<dbReference type="FunCoup" id="Q96EH5">
    <property type="interactions" value="190"/>
</dbReference>
<dbReference type="IntAct" id="Q96EH5">
    <property type="interactions" value="3"/>
</dbReference>
<dbReference type="STRING" id="9606.ENSP00000389356"/>
<dbReference type="GlyGen" id="Q96EH5">
    <property type="glycosylation" value="3 sites, 1 O-linked glycan (3 sites)"/>
</dbReference>
<dbReference type="iPTMnet" id="Q96EH5"/>
<dbReference type="PhosphoSitePlus" id="Q96EH5"/>
<dbReference type="BioMuta" id="RPL39L"/>
<dbReference type="DMDM" id="29427944"/>
<dbReference type="jPOST" id="Q96EH5"/>
<dbReference type="MassIVE" id="Q96EH5"/>
<dbReference type="PaxDb" id="9606-ENSP00000296277"/>
<dbReference type="PeptideAtlas" id="Q96EH5"/>
<dbReference type="TopDownProteomics" id="Q96EH5"/>
<dbReference type="Antibodypedia" id="33862">
    <property type="antibodies" value="100 antibodies from 25 providers"/>
</dbReference>
<dbReference type="DNASU" id="116832"/>
<dbReference type="Ensembl" id="ENST00000296277.9">
    <property type="protein sequence ID" value="ENSP00000296277.4"/>
    <property type="gene ID" value="ENSG00000163923.10"/>
</dbReference>
<dbReference type="Ensembl" id="ENST00000433055.1">
    <property type="protein sequence ID" value="ENSP00000389356.1"/>
    <property type="gene ID" value="ENSG00000163923.10"/>
</dbReference>
<dbReference type="Ensembl" id="ENST00000455270.5">
    <property type="protein sequence ID" value="ENSP00000397240.1"/>
    <property type="gene ID" value="ENSG00000163923.10"/>
</dbReference>
<dbReference type="GeneID" id="116832"/>
<dbReference type="KEGG" id="hsa:116832"/>
<dbReference type="MANE-Select" id="ENST00000296277.9">
    <property type="protein sequence ID" value="ENSP00000296277.4"/>
    <property type="RefSeq nucleotide sequence ID" value="NM_052969.3"/>
    <property type="RefSeq protein sequence ID" value="NP_443201.1"/>
</dbReference>
<dbReference type="UCSC" id="uc003fre.2">
    <property type="organism name" value="human"/>
</dbReference>
<dbReference type="AGR" id="HGNC:17094"/>
<dbReference type="CTD" id="116832"/>
<dbReference type="DisGeNET" id="116832"/>
<dbReference type="GeneCards" id="RPL39L"/>
<dbReference type="HGNC" id="HGNC:17094">
    <property type="gene designation" value="RPL39L"/>
</dbReference>
<dbReference type="HPA" id="ENSG00000163923">
    <property type="expression patterns" value="Tissue enriched (testis)"/>
</dbReference>
<dbReference type="MIM" id="607547">
    <property type="type" value="gene"/>
</dbReference>
<dbReference type="neXtProt" id="NX_Q96EH5"/>
<dbReference type="OpenTargets" id="ENSG00000163923"/>
<dbReference type="PharmGKB" id="PA34744"/>
<dbReference type="VEuPathDB" id="HostDB:ENSG00000163923"/>
<dbReference type="eggNOG" id="KOG0002">
    <property type="taxonomic scope" value="Eukaryota"/>
</dbReference>
<dbReference type="GeneTree" id="ENSGT00940000165055"/>
<dbReference type="HOGENOM" id="CLU_181948_3_0_1"/>
<dbReference type="InParanoid" id="Q96EH5"/>
<dbReference type="OMA" id="RIHLRTD"/>
<dbReference type="OrthoDB" id="444696at2759"/>
<dbReference type="PAN-GO" id="Q96EH5">
    <property type="GO annotations" value="1 GO annotation based on evolutionary models"/>
</dbReference>
<dbReference type="PhylomeDB" id="Q96EH5"/>
<dbReference type="TreeFam" id="TF300223"/>
<dbReference type="PathwayCommons" id="Q96EH5"/>
<dbReference type="Reactome" id="R-HSA-156827">
    <property type="pathway name" value="L13a-mediated translational silencing of Ceruloplasmin expression"/>
</dbReference>
<dbReference type="Reactome" id="R-HSA-156902">
    <property type="pathway name" value="Peptide chain elongation"/>
</dbReference>
<dbReference type="Reactome" id="R-HSA-1799339">
    <property type="pathway name" value="SRP-dependent cotranslational protein targeting to membrane"/>
</dbReference>
<dbReference type="Reactome" id="R-HSA-192823">
    <property type="pathway name" value="Viral mRNA Translation"/>
</dbReference>
<dbReference type="Reactome" id="R-HSA-2408557">
    <property type="pathway name" value="Selenocysteine synthesis"/>
</dbReference>
<dbReference type="Reactome" id="R-HSA-6791226">
    <property type="pathway name" value="Major pathway of rRNA processing in the nucleolus and cytosol"/>
</dbReference>
<dbReference type="Reactome" id="R-HSA-72689">
    <property type="pathway name" value="Formation of a pool of free 40S subunits"/>
</dbReference>
<dbReference type="Reactome" id="R-HSA-72706">
    <property type="pathway name" value="GTP hydrolysis and joining of the 60S ribosomal subunit"/>
</dbReference>
<dbReference type="Reactome" id="R-HSA-72764">
    <property type="pathway name" value="Eukaryotic Translation Termination"/>
</dbReference>
<dbReference type="Reactome" id="R-HSA-9010553">
    <property type="pathway name" value="Regulation of expression of SLITs and ROBOs"/>
</dbReference>
<dbReference type="Reactome" id="R-HSA-9633012">
    <property type="pathway name" value="Response of EIF2AK4 (GCN2) to amino acid deficiency"/>
</dbReference>
<dbReference type="Reactome" id="R-HSA-975956">
    <property type="pathway name" value="Nonsense Mediated Decay (NMD) independent of the Exon Junction Complex (EJC)"/>
</dbReference>
<dbReference type="Reactome" id="R-HSA-975957">
    <property type="pathway name" value="Nonsense Mediated Decay (NMD) enhanced by the Exon Junction Complex (EJC)"/>
</dbReference>
<dbReference type="SignaLink" id="Q96EH5"/>
<dbReference type="SIGNOR" id="Q96EH5"/>
<dbReference type="BioGRID-ORCS" id="116832">
    <property type="hits" value="47 hits in 1053 CRISPR screens"/>
</dbReference>
<dbReference type="ChiTaRS" id="RPL39L">
    <property type="organism name" value="human"/>
</dbReference>
<dbReference type="GenomeRNAi" id="116832"/>
<dbReference type="Pharos" id="Q96EH5">
    <property type="development level" value="Tbio"/>
</dbReference>
<dbReference type="PRO" id="PR:Q96EH5"/>
<dbReference type="Proteomes" id="UP000005640">
    <property type="component" value="Chromosome 3"/>
</dbReference>
<dbReference type="RNAct" id="Q96EH5">
    <property type="molecule type" value="protein"/>
</dbReference>
<dbReference type="Bgee" id="ENSG00000163923">
    <property type="expression patterns" value="Expressed in left testis and 125 other cell types or tissues"/>
</dbReference>
<dbReference type="GO" id="GO:0022625">
    <property type="term" value="C:cytosolic large ribosomal subunit"/>
    <property type="evidence" value="ECO:0000250"/>
    <property type="project" value="UniProtKB"/>
</dbReference>
<dbReference type="GO" id="GO:0003735">
    <property type="term" value="F:structural constituent of ribosome"/>
    <property type="evidence" value="ECO:0000250"/>
    <property type="project" value="UniProtKB"/>
</dbReference>
<dbReference type="GO" id="GO:0007283">
    <property type="term" value="P:spermatogenesis"/>
    <property type="evidence" value="ECO:0000270"/>
    <property type="project" value="UniProtKB"/>
</dbReference>
<dbReference type="GO" id="GO:0006412">
    <property type="term" value="P:translation"/>
    <property type="evidence" value="ECO:0007669"/>
    <property type="project" value="InterPro"/>
</dbReference>
<dbReference type="FunFam" id="1.10.1620.10:FF:000001">
    <property type="entry name" value="60S ribosomal protein-like L39"/>
    <property type="match status" value="1"/>
</dbReference>
<dbReference type="Gene3D" id="1.10.1620.10">
    <property type="entry name" value="Ribosomal protein L39e"/>
    <property type="match status" value="1"/>
</dbReference>
<dbReference type="HAMAP" id="MF_00629">
    <property type="entry name" value="Ribosomal_eL39"/>
    <property type="match status" value="1"/>
</dbReference>
<dbReference type="InterPro" id="IPR000077">
    <property type="entry name" value="Ribosomal_eL39"/>
</dbReference>
<dbReference type="InterPro" id="IPR020083">
    <property type="entry name" value="Ribosomal_eL39_CS"/>
</dbReference>
<dbReference type="InterPro" id="IPR023626">
    <property type="entry name" value="Ribosomal_eL39_dom_sf"/>
</dbReference>
<dbReference type="PANTHER" id="PTHR19970:SF22">
    <property type="entry name" value="RIBOSOMAL PROTEIN EL39-LIKE 2"/>
    <property type="match status" value="1"/>
</dbReference>
<dbReference type="PANTHER" id="PTHR19970">
    <property type="entry name" value="RIBOSOMAL PROTEIN L39E"/>
    <property type="match status" value="1"/>
</dbReference>
<dbReference type="Pfam" id="PF00832">
    <property type="entry name" value="Ribosomal_L39"/>
    <property type="match status" value="1"/>
</dbReference>
<dbReference type="SUPFAM" id="SSF48662">
    <property type="entry name" value="Ribosomal protein L39e"/>
    <property type="match status" value="1"/>
</dbReference>
<dbReference type="PROSITE" id="PS00051">
    <property type="entry name" value="RIBOSOMAL_L39E"/>
    <property type="match status" value="1"/>
</dbReference>
<keyword id="KW-0963">Cytoplasm</keyword>
<keyword id="KW-1267">Proteomics identification</keyword>
<keyword id="KW-1185">Reference proteome</keyword>
<keyword id="KW-0687">Ribonucleoprotein</keyword>
<keyword id="KW-0689">Ribosomal protein</keyword>
<feature type="chain" id="PRO_0000127027" description="Ribosomal protein eL39-like 2">
    <location>
        <begin position="1"/>
        <end position="51"/>
    </location>
</feature>